<sequence length="98" mass="10577">MVLTRVIRAVGRSTLLETGVAGSGGGQLQLVRLPLRRKYTYRSGALKPMPEITPFGLFGIIATVIPGLLIGATISKNMANFLEENDLFVPSDDDDDDD</sequence>
<gene>
    <name type="ORF">AGAP011291</name>
</gene>
<name>EMRE_ANOGA</name>
<evidence type="ECO:0000250" key="1">
    <source>
        <dbReference type="UniProtKB" id="Q9H4I9"/>
    </source>
</evidence>
<evidence type="ECO:0000255" key="2"/>
<evidence type="ECO:0000305" key="3"/>
<evidence type="ECO:0000312" key="4">
    <source>
        <dbReference type="EMBL" id="EAA05035.2"/>
    </source>
</evidence>
<protein>
    <recommendedName>
        <fullName evidence="1">Essential MCU regulator, mitochondrial</fullName>
    </recommendedName>
</protein>
<feature type="transit peptide" description="Mitochondrion" evidence="2">
    <location>
        <begin position="1"/>
        <end status="unknown"/>
    </location>
</feature>
<feature type="chain" id="PRO_0000307348" description="Essential MCU regulator, mitochondrial">
    <location>
        <begin status="unknown"/>
        <end position="98"/>
    </location>
</feature>
<feature type="transmembrane region" description="Helical" evidence="2">
    <location>
        <begin position="52"/>
        <end position="72"/>
    </location>
</feature>
<reference evidence="4" key="1">
    <citation type="journal article" date="2002" name="Science">
        <title>The genome sequence of the malaria mosquito Anopheles gambiae.</title>
        <authorList>
            <person name="Holt R.A."/>
            <person name="Subramanian G.M."/>
            <person name="Halpern A."/>
            <person name="Sutton G.G."/>
            <person name="Charlab R."/>
            <person name="Nusskern D.R."/>
            <person name="Wincker P."/>
            <person name="Clark A.G."/>
            <person name="Ribeiro J.M.C."/>
            <person name="Wides R."/>
            <person name="Salzberg S.L."/>
            <person name="Loftus B.J."/>
            <person name="Yandell M.D."/>
            <person name="Majoros W.H."/>
            <person name="Rusch D.B."/>
            <person name="Lai Z."/>
            <person name="Kraft C.L."/>
            <person name="Abril J.F."/>
            <person name="Anthouard V."/>
            <person name="Arensburger P."/>
            <person name="Atkinson P.W."/>
            <person name="Baden H."/>
            <person name="de Berardinis V."/>
            <person name="Baldwin D."/>
            <person name="Benes V."/>
            <person name="Biedler J."/>
            <person name="Blass C."/>
            <person name="Bolanos R."/>
            <person name="Boscus D."/>
            <person name="Barnstead M."/>
            <person name="Cai S."/>
            <person name="Center A."/>
            <person name="Chaturverdi K."/>
            <person name="Christophides G.K."/>
            <person name="Chrystal M.A.M."/>
            <person name="Clamp M."/>
            <person name="Cravchik A."/>
            <person name="Curwen V."/>
            <person name="Dana A."/>
            <person name="Delcher A."/>
            <person name="Dew I."/>
            <person name="Evans C.A."/>
            <person name="Flanigan M."/>
            <person name="Grundschober-Freimoser A."/>
            <person name="Friedli L."/>
            <person name="Gu Z."/>
            <person name="Guan P."/>
            <person name="Guigo R."/>
            <person name="Hillenmeyer M.E."/>
            <person name="Hladun S.L."/>
            <person name="Hogan J.R."/>
            <person name="Hong Y.S."/>
            <person name="Hoover J."/>
            <person name="Jaillon O."/>
            <person name="Ke Z."/>
            <person name="Kodira C.D."/>
            <person name="Kokoza E."/>
            <person name="Koutsos A."/>
            <person name="Letunic I."/>
            <person name="Levitsky A.A."/>
            <person name="Liang Y."/>
            <person name="Lin J.-J."/>
            <person name="Lobo N.F."/>
            <person name="Lopez J.R."/>
            <person name="Malek J.A."/>
            <person name="McIntosh T.C."/>
            <person name="Meister S."/>
            <person name="Miller J.R."/>
            <person name="Mobarry C."/>
            <person name="Mongin E."/>
            <person name="Murphy S.D."/>
            <person name="O'Brochta D.A."/>
            <person name="Pfannkoch C."/>
            <person name="Qi R."/>
            <person name="Regier M.A."/>
            <person name="Remington K."/>
            <person name="Shao H."/>
            <person name="Sharakhova M.V."/>
            <person name="Sitter C.D."/>
            <person name="Shetty J."/>
            <person name="Smith T.J."/>
            <person name="Strong R."/>
            <person name="Sun J."/>
            <person name="Thomasova D."/>
            <person name="Ton L.Q."/>
            <person name="Topalis P."/>
            <person name="Tu Z.J."/>
            <person name="Unger M.F."/>
            <person name="Walenz B."/>
            <person name="Wang A.H."/>
            <person name="Wang J."/>
            <person name="Wang M."/>
            <person name="Wang X."/>
            <person name="Woodford K.J."/>
            <person name="Wortman J.R."/>
            <person name="Wu M."/>
            <person name="Yao A."/>
            <person name="Zdobnov E.M."/>
            <person name="Zhang H."/>
            <person name="Zhao Q."/>
            <person name="Zhao S."/>
            <person name="Zhu S.C."/>
            <person name="Zhimulev I."/>
            <person name="Coluzzi M."/>
            <person name="della Torre A."/>
            <person name="Roth C.W."/>
            <person name="Louis C."/>
            <person name="Kalush F."/>
            <person name="Mural R.J."/>
            <person name="Myers E.W."/>
            <person name="Adams M.D."/>
            <person name="Smith H.O."/>
            <person name="Broder S."/>
            <person name="Gardner M.J."/>
            <person name="Fraser C.M."/>
            <person name="Birney E."/>
            <person name="Bork P."/>
            <person name="Brey P.T."/>
            <person name="Venter J.C."/>
            <person name="Weissenbach J."/>
            <person name="Kafatos F.C."/>
            <person name="Collins F.H."/>
            <person name="Hoffman S.L."/>
        </authorList>
    </citation>
    <scope>NUCLEOTIDE SEQUENCE [LARGE SCALE GENOMIC DNA]</scope>
    <source>
        <strain evidence="4">PEST</strain>
    </source>
</reference>
<organism>
    <name type="scientific">Anopheles gambiae</name>
    <name type="common">African malaria mosquito</name>
    <dbReference type="NCBI Taxonomy" id="7165"/>
    <lineage>
        <taxon>Eukaryota</taxon>
        <taxon>Metazoa</taxon>
        <taxon>Ecdysozoa</taxon>
        <taxon>Arthropoda</taxon>
        <taxon>Hexapoda</taxon>
        <taxon>Insecta</taxon>
        <taxon>Pterygota</taxon>
        <taxon>Neoptera</taxon>
        <taxon>Endopterygota</taxon>
        <taxon>Diptera</taxon>
        <taxon>Nematocera</taxon>
        <taxon>Culicoidea</taxon>
        <taxon>Culicidae</taxon>
        <taxon>Anophelinae</taxon>
        <taxon>Anopheles</taxon>
    </lineage>
</organism>
<proteinExistence type="inferred from homology"/>
<keyword id="KW-0106">Calcium</keyword>
<keyword id="KW-0109">Calcium transport</keyword>
<keyword id="KW-0406">Ion transport</keyword>
<keyword id="KW-0472">Membrane</keyword>
<keyword id="KW-0496">Mitochondrion</keyword>
<keyword id="KW-0999">Mitochondrion inner membrane</keyword>
<keyword id="KW-1185">Reference proteome</keyword>
<keyword id="KW-0809">Transit peptide</keyword>
<keyword id="KW-0812">Transmembrane</keyword>
<keyword id="KW-1133">Transmembrane helix</keyword>
<keyword id="KW-0813">Transport</keyword>
<comment type="function">
    <text evidence="1">Essential regulatory subunit of the mitochondrial calcium uniporter (mcu) channel, a protein that mediates calcium uptake into mitochondria.</text>
</comment>
<comment type="subcellular location">
    <subcellularLocation>
        <location evidence="1">Mitochondrion inner membrane</location>
        <topology evidence="1">Single-pass membrane protein</topology>
    </subcellularLocation>
</comment>
<comment type="similarity">
    <text evidence="3">Belongs to the SMDT1/EMRE family.</text>
</comment>
<dbReference type="EMBL" id="AAAB01008816">
    <property type="protein sequence ID" value="EAA05035.2"/>
    <property type="molecule type" value="Genomic_DNA"/>
</dbReference>
<dbReference type="SMR" id="Q7QHP6"/>
<dbReference type="FunCoup" id="Q7QHP6">
    <property type="interactions" value="203"/>
</dbReference>
<dbReference type="STRING" id="7165.Q7QHP6"/>
<dbReference type="PaxDb" id="7165-AGAP011291-PA"/>
<dbReference type="EnsemblMetazoa" id="AGAP011291-RA">
    <property type="protein sequence ID" value="AGAP011291-PA"/>
    <property type="gene ID" value="AGAP011291"/>
</dbReference>
<dbReference type="GeneID" id="1270642"/>
<dbReference type="KEGG" id="aga:1270642"/>
<dbReference type="CTD" id="37071"/>
<dbReference type="VEuPathDB" id="VectorBase:AGAMI1_012682"/>
<dbReference type="VEuPathDB" id="VectorBase:AGAP011291"/>
<dbReference type="eggNOG" id="KOG4542">
    <property type="taxonomic scope" value="Eukaryota"/>
</dbReference>
<dbReference type="HOGENOM" id="CLU_172921_0_1_1"/>
<dbReference type="InParanoid" id="Q7QHP6"/>
<dbReference type="OMA" id="MGTQISK"/>
<dbReference type="PhylomeDB" id="Q7QHP6"/>
<dbReference type="Proteomes" id="UP000007062">
    <property type="component" value="Chromosome 3L"/>
</dbReference>
<dbReference type="GO" id="GO:1990246">
    <property type="term" value="C:uniplex complex"/>
    <property type="evidence" value="ECO:0000318"/>
    <property type="project" value="GO_Central"/>
</dbReference>
<dbReference type="GO" id="GO:0036444">
    <property type="term" value="P:calcium import into the mitochondrion"/>
    <property type="evidence" value="ECO:0000318"/>
    <property type="project" value="GO_Central"/>
</dbReference>
<dbReference type="GO" id="GO:0051560">
    <property type="term" value="P:mitochondrial calcium ion homeostasis"/>
    <property type="evidence" value="ECO:0000318"/>
    <property type="project" value="GO_Central"/>
</dbReference>
<dbReference type="InterPro" id="IPR018782">
    <property type="entry name" value="MCU_reg"/>
</dbReference>
<dbReference type="PANTHER" id="PTHR33904">
    <property type="entry name" value="ESSENTIAL MCU REGULATOR, MITOCHONDRIAL"/>
    <property type="match status" value="1"/>
</dbReference>
<dbReference type="PANTHER" id="PTHR33904:SF1">
    <property type="entry name" value="ESSENTIAL MCU REGULATOR, MITOCHONDRIAL"/>
    <property type="match status" value="1"/>
</dbReference>
<dbReference type="Pfam" id="PF10161">
    <property type="entry name" value="DDDD"/>
    <property type="match status" value="1"/>
</dbReference>
<accession>Q7QHP6</accession>